<evidence type="ECO:0000255" key="1">
    <source>
        <dbReference type="HAMAP-Rule" id="MF_00514"/>
    </source>
</evidence>
<evidence type="ECO:0000305" key="2"/>
<protein>
    <recommendedName>
        <fullName evidence="1">Large ribosomal subunit protein bL35</fullName>
    </recommendedName>
    <alternativeName>
        <fullName evidence="2">50S ribosomal protein L35</fullName>
    </alternativeName>
</protein>
<gene>
    <name evidence="1" type="primary">rpmI</name>
    <name type="ordered locus">bsl0708</name>
</gene>
<reference key="1">
    <citation type="journal article" date="2002" name="DNA Res.">
        <title>Complete genomic sequence of nitrogen-fixing symbiotic bacterium Bradyrhizobium japonicum USDA110.</title>
        <authorList>
            <person name="Kaneko T."/>
            <person name="Nakamura Y."/>
            <person name="Sato S."/>
            <person name="Minamisawa K."/>
            <person name="Uchiumi T."/>
            <person name="Sasamoto S."/>
            <person name="Watanabe A."/>
            <person name="Idesawa K."/>
            <person name="Iriguchi M."/>
            <person name="Kawashima K."/>
            <person name="Kohara M."/>
            <person name="Matsumoto M."/>
            <person name="Shimpo S."/>
            <person name="Tsuruoka H."/>
            <person name="Wada T."/>
            <person name="Yamada M."/>
            <person name="Tabata S."/>
        </authorList>
    </citation>
    <scope>NUCLEOTIDE SEQUENCE [LARGE SCALE GENOMIC DNA]</scope>
    <source>
        <strain>JCM 10833 / BCRC 13528 / IAM 13628 / NBRC 14792 / USDA 110</strain>
    </source>
</reference>
<sequence length="66" mass="7611">MPKLKTKSGAKKRFKVTATGKVMHAQRGKRHGMIKRTKKQIRQLRGTRVLFKTDGDNVKKYFLPNA</sequence>
<proteinExistence type="inferred from homology"/>
<accession>Q89WH9</accession>
<name>RL35_BRADU</name>
<comment type="similarity">
    <text evidence="1">Belongs to the bacterial ribosomal protein bL35 family.</text>
</comment>
<keyword id="KW-1185">Reference proteome</keyword>
<keyword id="KW-0687">Ribonucleoprotein</keyword>
<keyword id="KW-0689">Ribosomal protein</keyword>
<dbReference type="EMBL" id="BA000040">
    <property type="protein sequence ID" value="BAC45973.1"/>
    <property type="molecule type" value="Genomic_DNA"/>
</dbReference>
<dbReference type="RefSeq" id="NP_767348.1">
    <property type="nucleotide sequence ID" value="NC_004463.1"/>
</dbReference>
<dbReference type="RefSeq" id="WP_008539890.1">
    <property type="nucleotide sequence ID" value="NZ_CP011360.1"/>
</dbReference>
<dbReference type="SMR" id="Q89WH9"/>
<dbReference type="FunCoup" id="Q89WH9">
    <property type="interactions" value="448"/>
</dbReference>
<dbReference type="STRING" id="224911.AAV28_00380"/>
<dbReference type="EnsemblBacteria" id="BAC45973">
    <property type="protein sequence ID" value="BAC45973"/>
    <property type="gene ID" value="BAC45973"/>
</dbReference>
<dbReference type="GeneID" id="93180943"/>
<dbReference type="KEGG" id="bja:bsl0708"/>
<dbReference type="PATRIC" id="fig|224911.44.peg.80"/>
<dbReference type="eggNOG" id="COG0291">
    <property type="taxonomic scope" value="Bacteria"/>
</dbReference>
<dbReference type="HOGENOM" id="CLU_169643_2_1_5"/>
<dbReference type="InParanoid" id="Q89WH9"/>
<dbReference type="OrthoDB" id="9804851at2"/>
<dbReference type="PhylomeDB" id="Q89WH9"/>
<dbReference type="PRO" id="PR:Q89WH9"/>
<dbReference type="Proteomes" id="UP000002526">
    <property type="component" value="Chromosome"/>
</dbReference>
<dbReference type="GO" id="GO:0022625">
    <property type="term" value="C:cytosolic large ribosomal subunit"/>
    <property type="evidence" value="ECO:0000318"/>
    <property type="project" value="GO_Central"/>
</dbReference>
<dbReference type="GO" id="GO:0003735">
    <property type="term" value="F:structural constituent of ribosome"/>
    <property type="evidence" value="ECO:0000318"/>
    <property type="project" value="GO_Central"/>
</dbReference>
<dbReference type="GO" id="GO:0006412">
    <property type="term" value="P:translation"/>
    <property type="evidence" value="ECO:0007669"/>
    <property type="project" value="UniProtKB-UniRule"/>
</dbReference>
<dbReference type="FunFam" id="4.10.410.60:FF:000001">
    <property type="entry name" value="50S ribosomal protein L35"/>
    <property type="match status" value="1"/>
</dbReference>
<dbReference type="Gene3D" id="4.10.410.60">
    <property type="match status" value="1"/>
</dbReference>
<dbReference type="HAMAP" id="MF_00514">
    <property type="entry name" value="Ribosomal_bL35"/>
    <property type="match status" value="1"/>
</dbReference>
<dbReference type="InterPro" id="IPR001706">
    <property type="entry name" value="Ribosomal_bL35"/>
</dbReference>
<dbReference type="InterPro" id="IPR021137">
    <property type="entry name" value="Ribosomal_bL35-like"/>
</dbReference>
<dbReference type="InterPro" id="IPR018265">
    <property type="entry name" value="Ribosomal_bL35_CS"/>
</dbReference>
<dbReference type="InterPro" id="IPR037229">
    <property type="entry name" value="Ribosomal_bL35_sf"/>
</dbReference>
<dbReference type="NCBIfam" id="TIGR00001">
    <property type="entry name" value="rpmI_bact"/>
    <property type="match status" value="1"/>
</dbReference>
<dbReference type="PANTHER" id="PTHR33343">
    <property type="entry name" value="54S RIBOSOMAL PROTEIN BL35M"/>
    <property type="match status" value="1"/>
</dbReference>
<dbReference type="PANTHER" id="PTHR33343:SF1">
    <property type="entry name" value="LARGE RIBOSOMAL SUBUNIT PROTEIN BL35M"/>
    <property type="match status" value="1"/>
</dbReference>
<dbReference type="Pfam" id="PF01632">
    <property type="entry name" value="Ribosomal_L35p"/>
    <property type="match status" value="1"/>
</dbReference>
<dbReference type="PRINTS" id="PR00064">
    <property type="entry name" value="RIBOSOMALL35"/>
</dbReference>
<dbReference type="SUPFAM" id="SSF143034">
    <property type="entry name" value="L35p-like"/>
    <property type="match status" value="1"/>
</dbReference>
<dbReference type="PROSITE" id="PS00936">
    <property type="entry name" value="RIBOSOMAL_L35"/>
    <property type="match status" value="1"/>
</dbReference>
<organism>
    <name type="scientific">Bradyrhizobium diazoefficiens (strain JCM 10833 / BCRC 13528 / IAM 13628 / NBRC 14792 / USDA 110)</name>
    <dbReference type="NCBI Taxonomy" id="224911"/>
    <lineage>
        <taxon>Bacteria</taxon>
        <taxon>Pseudomonadati</taxon>
        <taxon>Pseudomonadota</taxon>
        <taxon>Alphaproteobacteria</taxon>
        <taxon>Hyphomicrobiales</taxon>
        <taxon>Nitrobacteraceae</taxon>
        <taxon>Bradyrhizobium</taxon>
    </lineage>
</organism>
<feature type="chain" id="PRO_0000177336" description="Large ribosomal subunit protein bL35">
    <location>
        <begin position="1"/>
        <end position="66"/>
    </location>
</feature>